<protein>
    <recommendedName>
        <fullName>Protein P1</fullName>
    </recommendedName>
    <alternativeName>
        <fullName>ORF 1</fullName>
    </alternativeName>
    <alternativeName>
        <fullName>P24</fullName>
    </alternativeName>
</protein>
<dbReference type="EMBL" id="X57924">
    <property type="protein sequence ID" value="CAA40995.1"/>
    <property type="molecule type" value="Genomic_DNA"/>
</dbReference>
<dbReference type="EMBL" id="M65026">
    <property type="status" value="NOT_ANNOTATED_CDS"/>
    <property type="molecule type" value="Genomic_DNA"/>
</dbReference>
<dbReference type="PIR" id="A40785">
    <property type="entry name" value="A40785"/>
</dbReference>
<dbReference type="RefSeq" id="NP_056760.1">
    <property type="nucleotide sequence ID" value="NC_001914.1"/>
</dbReference>
<dbReference type="SMR" id="P27500"/>
<dbReference type="GeneID" id="1489558"/>
<dbReference type="KEGG" id="vg:1489558"/>
<dbReference type="Proteomes" id="UP000002246">
    <property type="component" value="Segment"/>
</dbReference>
<proteinExistence type="predicted"/>
<keyword id="KW-1185">Reference proteome</keyword>
<organism>
    <name type="scientific">Rice tungro bacilliform virus (isolate Philippines)</name>
    <name type="common">RTBV</name>
    <dbReference type="NCBI Taxonomy" id="10655"/>
    <lineage>
        <taxon>Viruses</taxon>
        <taxon>Riboviria</taxon>
        <taxon>Pararnavirae</taxon>
        <taxon>Artverviricota</taxon>
        <taxon>Revtraviricetes</taxon>
        <taxon>Ortervirales</taxon>
        <taxon>Caulimoviridae</taxon>
        <taxon>Tungrovirus</taxon>
        <taxon>Tungrovirus oryzae</taxon>
    </lineage>
</organism>
<sequence length="199" mass="23692">VPKRDLISQNIESRYEKLEFLDLAVWGKEKKQKYLLSTDNISFYCYFDTSKTSESERKHTFHSDNKQLNSIVDLIIKHSEKTKNIKEELEKYSQFLDKILDLKPTKKQVEKLLENQNLISKNFDYIKEQNTQLEKSLRKTVKLEDSINTLLVEIQQARPKEVELRTLKIAEQNSKAIEKFEQEIKDLREILEFLKHQAT</sequence>
<feature type="chain" id="PRO_0000066385" description="Protein P1">
    <location>
        <begin position="1"/>
        <end position="199"/>
    </location>
</feature>
<feature type="sequence conflict" description="In Ref. 2." evidence="1" ref="2">
    <original>V</original>
    <variation>F</variation>
    <location>
        <position position="1"/>
    </location>
</feature>
<feature type="sequence conflict" description="In Ref. 2." evidence="1" ref="2">
    <original>F</original>
    <variation>S</variation>
    <location>
        <position position="95"/>
    </location>
</feature>
<name>P1_RTBVP</name>
<evidence type="ECO:0000305" key="1"/>
<reference key="1">
    <citation type="journal article" date="1991" name="Nucleic Acids Res.">
        <title>An analysis of the sequence of an infectious clone of rice tungro bacilliform virus, a plant pararetrovirus.</title>
        <authorList>
            <person name="Hay J.M."/>
            <person name="Jones M.C."/>
            <person name="Blakebrough M.L."/>
            <person name="Dasgupta I."/>
            <person name="Davies J.W."/>
            <person name="Hull R."/>
        </authorList>
    </citation>
    <scope>NUCLEOTIDE SEQUENCE [GENOMIC DNA]</scope>
</reference>
<reference key="2">
    <citation type="journal article" date="1991" name="Virology">
        <title>Characterization of the genome of rice tungro bacilliform virus: comparison with Commelina yellow mottle virus and caulimoviruses.</title>
        <authorList>
            <person name="Qu R.D."/>
            <person name="Bhattacharyya M."/>
            <person name="Laco G.S."/>
            <person name="de Kochko A."/>
            <person name="Rao B.L.S."/>
            <person name="Kaniewska M.B."/>
            <person name="Elmer J.S."/>
            <person name="Rochester D.E."/>
            <person name="Smith C.E."/>
            <person name="Beachy R.N."/>
        </authorList>
    </citation>
    <scope>NUCLEOTIDE SEQUENCE [GENOMIC DNA]</scope>
</reference>
<accession>P27500</accession>
<accession>P27530</accession>
<organismHost>
    <name type="scientific">Oryza sativa</name>
    <name type="common">Rice</name>
    <dbReference type="NCBI Taxonomy" id="4530"/>
</organismHost>